<reference key="1">
    <citation type="journal article" date="2002" name="Nature">
        <title>Comparison of the genomes of two Xanthomonas pathogens with differing host specificities.</title>
        <authorList>
            <person name="da Silva A.C.R."/>
            <person name="Ferro J.A."/>
            <person name="Reinach F.C."/>
            <person name="Farah C.S."/>
            <person name="Furlan L.R."/>
            <person name="Quaggio R.B."/>
            <person name="Monteiro-Vitorello C.B."/>
            <person name="Van Sluys M.A."/>
            <person name="Almeida N.F. Jr."/>
            <person name="Alves L.M.C."/>
            <person name="do Amaral A.M."/>
            <person name="Bertolini M.C."/>
            <person name="Camargo L.E.A."/>
            <person name="Camarotte G."/>
            <person name="Cannavan F."/>
            <person name="Cardozo J."/>
            <person name="Chambergo F."/>
            <person name="Ciapina L.P."/>
            <person name="Cicarelli R.M.B."/>
            <person name="Coutinho L.L."/>
            <person name="Cursino-Santos J.R."/>
            <person name="El-Dorry H."/>
            <person name="Faria J.B."/>
            <person name="Ferreira A.J.S."/>
            <person name="Ferreira R.C.C."/>
            <person name="Ferro M.I.T."/>
            <person name="Formighieri E.F."/>
            <person name="Franco M.C."/>
            <person name="Greggio C.C."/>
            <person name="Gruber A."/>
            <person name="Katsuyama A.M."/>
            <person name="Kishi L.T."/>
            <person name="Leite R.P."/>
            <person name="Lemos E.G.M."/>
            <person name="Lemos M.V.F."/>
            <person name="Locali E.C."/>
            <person name="Machado M.A."/>
            <person name="Madeira A.M.B.N."/>
            <person name="Martinez-Rossi N.M."/>
            <person name="Martins E.C."/>
            <person name="Meidanis J."/>
            <person name="Menck C.F.M."/>
            <person name="Miyaki C.Y."/>
            <person name="Moon D.H."/>
            <person name="Moreira L.M."/>
            <person name="Novo M.T.M."/>
            <person name="Okura V.K."/>
            <person name="Oliveira M.C."/>
            <person name="Oliveira V.R."/>
            <person name="Pereira H.A."/>
            <person name="Rossi A."/>
            <person name="Sena J.A.D."/>
            <person name="Silva C."/>
            <person name="de Souza R.F."/>
            <person name="Spinola L.A.F."/>
            <person name="Takita M.A."/>
            <person name="Tamura R.E."/>
            <person name="Teixeira E.C."/>
            <person name="Tezza R.I.D."/>
            <person name="Trindade dos Santos M."/>
            <person name="Truffi D."/>
            <person name="Tsai S.M."/>
            <person name="White F.F."/>
            <person name="Setubal J.C."/>
            <person name="Kitajima J.P."/>
        </authorList>
    </citation>
    <scope>NUCLEOTIDE SEQUENCE [LARGE SCALE GENOMIC DNA]</scope>
    <source>
        <strain>306</strain>
    </source>
</reference>
<gene>
    <name evidence="1" type="primary">lpxH</name>
    <name type="ordered locus">XAC1036</name>
</gene>
<keyword id="KW-0997">Cell inner membrane</keyword>
<keyword id="KW-1003">Cell membrane</keyword>
<keyword id="KW-0378">Hydrolase</keyword>
<keyword id="KW-0441">Lipid A biosynthesis</keyword>
<keyword id="KW-0444">Lipid biosynthesis</keyword>
<keyword id="KW-0443">Lipid metabolism</keyword>
<keyword id="KW-0464">Manganese</keyword>
<keyword id="KW-0472">Membrane</keyword>
<keyword id="KW-0479">Metal-binding</keyword>
<proteinExistence type="inferred from homology"/>
<name>LPXH_XANAC</name>
<organism>
    <name type="scientific">Xanthomonas axonopodis pv. citri (strain 306)</name>
    <dbReference type="NCBI Taxonomy" id="190486"/>
    <lineage>
        <taxon>Bacteria</taxon>
        <taxon>Pseudomonadati</taxon>
        <taxon>Pseudomonadota</taxon>
        <taxon>Gammaproteobacteria</taxon>
        <taxon>Lysobacterales</taxon>
        <taxon>Lysobacteraceae</taxon>
        <taxon>Xanthomonas</taxon>
    </lineage>
</organism>
<evidence type="ECO:0000255" key="1">
    <source>
        <dbReference type="HAMAP-Rule" id="MF_00575"/>
    </source>
</evidence>
<protein>
    <recommendedName>
        <fullName evidence="1">UDP-2,3-diacylglucosamine hydrolase</fullName>
        <ecNumber evidence="1">3.6.1.54</ecNumber>
    </recommendedName>
    <alternativeName>
        <fullName evidence="1">UDP-2,3-diacylglucosamine diphosphatase</fullName>
    </alternativeName>
</protein>
<feature type="chain" id="PRO_0000214130" description="UDP-2,3-diacylglucosamine hydrolase">
    <location>
        <begin position="1"/>
        <end position="247"/>
    </location>
</feature>
<feature type="binding site" evidence="1">
    <location>
        <position position="8"/>
    </location>
    <ligand>
        <name>Mn(2+)</name>
        <dbReference type="ChEBI" id="CHEBI:29035"/>
        <label>1</label>
    </ligand>
</feature>
<feature type="binding site" evidence="1">
    <location>
        <position position="10"/>
    </location>
    <ligand>
        <name>Mn(2+)</name>
        <dbReference type="ChEBI" id="CHEBI:29035"/>
        <label>1</label>
    </ligand>
</feature>
<feature type="binding site" evidence="1">
    <location>
        <position position="41"/>
    </location>
    <ligand>
        <name>Mn(2+)</name>
        <dbReference type="ChEBI" id="CHEBI:29035"/>
        <label>1</label>
    </ligand>
</feature>
<feature type="binding site" evidence="1">
    <location>
        <position position="41"/>
    </location>
    <ligand>
        <name>Mn(2+)</name>
        <dbReference type="ChEBI" id="CHEBI:29035"/>
        <label>2</label>
    </ligand>
</feature>
<feature type="binding site" evidence="1">
    <location>
        <begin position="79"/>
        <end position="80"/>
    </location>
    <ligand>
        <name>substrate</name>
    </ligand>
</feature>
<feature type="binding site" evidence="1">
    <location>
        <position position="79"/>
    </location>
    <ligand>
        <name>Mn(2+)</name>
        <dbReference type="ChEBI" id="CHEBI:29035"/>
        <label>2</label>
    </ligand>
</feature>
<feature type="binding site" evidence="1">
    <location>
        <position position="114"/>
    </location>
    <ligand>
        <name>Mn(2+)</name>
        <dbReference type="ChEBI" id="CHEBI:29035"/>
        <label>2</label>
    </ligand>
</feature>
<feature type="binding site" evidence="1">
    <location>
        <position position="122"/>
    </location>
    <ligand>
        <name>substrate</name>
    </ligand>
</feature>
<feature type="binding site" evidence="1">
    <location>
        <position position="160"/>
    </location>
    <ligand>
        <name>substrate</name>
    </ligand>
</feature>
<feature type="binding site" evidence="1">
    <location>
        <position position="171"/>
    </location>
    <ligand>
        <name>substrate</name>
    </ligand>
</feature>
<feature type="binding site" evidence="1">
    <location>
        <position position="174"/>
    </location>
    <ligand>
        <name>substrate</name>
    </ligand>
</feature>
<feature type="binding site" evidence="1">
    <location>
        <position position="202"/>
    </location>
    <ligand>
        <name>Mn(2+)</name>
        <dbReference type="ChEBI" id="CHEBI:29035"/>
        <label>2</label>
    </ligand>
</feature>
<feature type="binding site" evidence="1">
    <location>
        <position position="202"/>
    </location>
    <ligand>
        <name>substrate</name>
    </ligand>
</feature>
<feature type="binding site" evidence="1">
    <location>
        <position position="204"/>
    </location>
    <ligand>
        <name>Mn(2+)</name>
        <dbReference type="ChEBI" id="CHEBI:29035"/>
        <label>1</label>
    </ligand>
</feature>
<dbReference type="EC" id="3.6.1.54" evidence="1"/>
<dbReference type="EMBL" id="AE008923">
    <property type="protein sequence ID" value="AAM35919.1"/>
    <property type="molecule type" value="Genomic_DNA"/>
</dbReference>
<dbReference type="RefSeq" id="WP_003483738.1">
    <property type="nucleotide sequence ID" value="NC_003919.1"/>
</dbReference>
<dbReference type="SMR" id="P58975"/>
<dbReference type="GeneID" id="66910220"/>
<dbReference type="KEGG" id="xac:XAC1036"/>
<dbReference type="eggNOG" id="COG2908">
    <property type="taxonomic scope" value="Bacteria"/>
</dbReference>
<dbReference type="HOGENOM" id="CLU_074586_0_0_6"/>
<dbReference type="UniPathway" id="UPA00359">
    <property type="reaction ID" value="UER00480"/>
</dbReference>
<dbReference type="Proteomes" id="UP000000576">
    <property type="component" value="Chromosome"/>
</dbReference>
<dbReference type="GO" id="GO:0005737">
    <property type="term" value="C:cytoplasm"/>
    <property type="evidence" value="ECO:0007669"/>
    <property type="project" value="InterPro"/>
</dbReference>
<dbReference type="GO" id="GO:0019897">
    <property type="term" value="C:extrinsic component of plasma membrane"/>
    <property type="evidence" value="ECO:0007669"/>
    <property type="project" value="UniProtKB-UniRule"/>
</dbReference>
<dbReference type="GO" id="GO:0030145">
    <property type="term" value="F:manganese ion binding"/>
    <property type="evidence" value="ECO:0007669"/>
    <property type="project" value="UniProtKB-UniRule"/>
</dbReference>
<dbReference type="GO" id="GO:0008758">
    <property type="term" value="F:UDP-2,3-diacylglucosamine hydrolase activity"/>
    <property type="evidence" value="ECO:0007669"/>
    <property type="project" value="UniProtKB-UniRule"/>
</dbReference>
<dbReference type="GO" id="GO:0009245">
    <property type="term" value="P:lipid A biosynthetic process"/>
    <property type="evidence" value="ECO:0007669"/>
    <property type="project" value="UniProtKB-UniRule"/>
</dbReference>
<dbReference type="CDD" id="cd07398">
    <property type="entry name" value="MPP_YbbF-LpxH"/>
    <property type="match status" value="1"/>
</dbReference>
<dbReference type="Gene3D" id="3.60.21.10">
    <property type="match status" value="1"/>
</dbReference>
<dbReference type="HAMAP" id="MF_00575">
    <property type="entry name" value="LpxH"/>
    <property type="match status" value="1"/>
</dbReference>
<dbReference type="InterPro" id="IPR004843">
    <property type="entry name" value="Calcineurin-like_PHP_ApaH"/>
</dbReference>
<dbReference type="InterPro" id="IPR043461">
    <property type="entry name" value="LpxH-like"/>
</dbReference>
<dbReference type="InterPro" id="IPR029052">
    <property type="entry name" value="Metallo-depent_PP-like"/>
</dbReference>
<dbReference type="InterPro" id="IPR010138">
    <property type="entry name" value="UDP-diacylglucosamine_Hdrlase"/>
</dbReference>
<dbReference type="NCBIfam" id="TIGR01854">
    <property type="entry name" value="lipid_A_lpxH"/>
    <property type="match status" value="1"/>
</dbReference>
<dbReference type="NCBIfam" id="NF003743">
    <property type="entry name" value="PRK05340.1"/>
    <property type="match status" value="1"/>
</dbReference>
<dbReference type="PANTHER" id="PTHR34990:SF1">
    <property type="entry name" value="UDP-2,3-DIACYLGLUCOSAMINE HYDROLASE"/>
    <property type="match status" value="1"/>
</dbReference>
<dbReference type="PANTHER" id="PTHR34990">
    <property type="entry name" value="UDP-2,3-DIACYLGLUCOSAMINE HYDROLASE-RELATED"/>
    <property type="match status" value="1"/>
</dbReference>
<dbReference type="Pfam" id="PF00149">
    <property type="entry name" value="Metallophos"/>
    <property type="match status" value="1"/>
</dbReference>
<dbReference type="SUPFAM" id="SSF56300">
    <property type="entry name" value="Metallo-dependent phosphatases"/>
    <property type="match status" value="1"/>
</dbReference>
<comment type="function">
    <text evidence="1">Hydrolyzes the pyrophosphate bond of UDP-2,3-diacylglucosamine to yield 2,3-diacylglucosamine 1-phosphate (lipid X) and UMP by catalyzing the attack of water at the alpha-P atom. Involved in the biosynthesis of lipid A, a phosphorylated glycolipid that anchors the lipopolysaccharide to the outer membrane of the cell.</text>
</comment>
<comment type="catalytic activity">
    <reaction evidence="1">
        <text>UDP-2-N,3-O-bis[(3R)-3-hydroxytetradecanoyl]-alpha-D-glucosamine + H2O = 2-N,3-O-bis[(3R)-3-hydroxytetradecanoyl]-alpha-D-glucosaminyl 1-phosphate + UMP + 2 H(+)</text>
        <dbReference type="Rhea" id="RHEA:25213"/>
        <dbReference type="ChEBI" id="CHEBI:15377"/>
        <dbReference type="ChEBI" id="CHEBI:15378"/>
        <dbReference type="ChEBI" id="CHEBI:57865"/>
        <dbReference type="ChEBI" id="CHEBI:57957"/>
        <dbReference type="ChEBI" id="CHEBI:78847"/>
        <dbReference type="EC" id="3.6.1.54"/>
    </reaction>
</comment>
<comment type="cofactor">
    <cofactor evidence="1">
        <name>Mn(2+)</name>
        <dbReference type="ChEBI" id="CHEBI:29035"/>
    </cofactor>
    <text evidence="1">Binds 2 Mn(2+) ions per subunit in a binuclear metal center.</text>
</comment>
<comment type="pathway">
    <text evidence="1">Glycolipid biosynthesis; lipid IV(A) biosynthesis; lipid IV(A) from (3R)-3-hydroxytetradecanoyl-[acyl-carrier-protein] and UDP-N-acetyl-alpha-D-glucosamine: step 4/6.</text>
</comment>
<comment type="subcellular location">
    <subcellularLocation>
        <location evidence="1">Cell inner membrane</location>
        <topology evidence="1">Peripheral membrane protein</topology>
        <orientation evidence="1">Cytoplasmic side</orientation>
    </subcellularLocation>
</comment>
<comment type="similarity">
    <text evidence="1">Belongs to the LpxH family.</text>
</comment>
<sequence length="247" mass="26976">MTTLFISDLHLDPARPAITELFLEFLRTQVPGSDALYILGDLFEAWIGDDTPSTAADAVAVALHAVADSGVPVFFMAGNRDFLVGETYAQRAGFRILPDPTVIDLYGHTTLLMHGDLLCTDDTAYQAFRAQTRDPVFQAQFLAQPLAARVAFAQQARAASQARHAELKQGDQSRFETVTDVSPAEVEATFVRYGLDRLIHGHTHRPAIHTLQAGGHTCTRIVLGDWYEQGSVLRVDADGASLEQLAL</sequence>
<accession>P58975</accession>